<name>RNP4_METMA</name>
<protein>
    <recommendedName>
        <fullName evidence="1">Ribonuclease P protein component 4</fullName>
        <shortName evidence="1">RNase P component 4</shortName>
        <ecNumber evidence="1">3.1.26.5</ecNumber>
    </recommendedName>
    <alternativeName>
        <fullName evidence="1">Rpp21</fullName>
    </alternativeName>
</protein>
<dbReference type="EC" id="3.1.26.5" evidence="1"/>
<dbReference type="EMBL" id="AE008384">
    <property type="protein sequence ID" value="AAM31252.1"/>
    <property type="molecule type" value="Genomic_DNA"/>
</dbReference>
<dbReference type="RefSeq" id="WP_011033502.1">
    <property type="nucleotide sequence ID" value="NC_003901.1"/>
</dbReference>
<dbReference type="SMR" id="Q8PWM8"/>
<dbReference type="KEGG" id="mma:MM_1556"/>
<dbReference type="PATRIC" id="fig|192952.21.peg.1800"/>
<dbReference type="eggNOG" id="arCOG04345">
    <property type="taxonomic scope" value="Archaea"/>
</dbReference>
<dbReference type="HOGENOM" id="CLU_079140_3_0_2"/>
<dbReference type="Proteomes" id="UP000000595">
    <property type="component" value="Chromosome"/>
</dbReference>
<dbReference type="GO" id="GO:0005737">
    <property type="term" value="C:cytoplasm"/>
    <property type="evidence" value="ECO:0007669"/>
    <property type="project" value="UniProtKB-SubCell"/>
</dbReference>
<dbReference type="GO" id="GO:0030677">
    <property type="term" value="C:ribonuclease P complex"/>
    <property type="evidence" value="ECO:0007669"/>
    <property type="project" value="UniProtKB-UniRule"/>
</dbReference>
<dbReference type="GO" id="GO:0004526">
    <property type="term" value="F:ribonuclease P activity"/>
    <property type="evidence" value="ECO:0007669"/>
    <property type="project" value="UniProtKB-UniRule"/>
</dbReference>
<dbReference type="GO" id="GO:0008270">
    <property type="term" value="F:zinc ion binding"/>
    <property type="evidence" value="ECO:0007669"/>
    <property type="project" value="UniProtKB-UniRule"/>
</dbReference>
<dbReference type="GO" id="GO:0001682">
    <property type="term" value="P:tRNA 5'-leader removal"/>
    <property type="evidence" value="ECO:0007669"/>
    <property type="project" value="UniProtKB-UniRule"/>
</dbReference>
<dbReference type="Gene3D" id="6.20.50.20">
    <property type="match status" value="1"/>
</dbReference>
<dbReference type="Gene3D" id="1.20.5.420">
    <property type="entry name" value="Immunoglobulin FC, subunit C"/>
    <property type="match status" value="1"/>
</dbReference>
<dbReference type="HAMAP" id="MF_00757">
    <property type="entry name" value="RNase_P_4"/>
    <property type="match status" value="1"/>
</dbReference>
<dbReference type="InterPro" id="IPR016432">
    <property type="entry name" value="RNP4"/>
</dbReference>
<dbReference type="InterPro" id="IPR007175">
    <property type="entry name" value="Rpr2/Snm1/Rpp21"/>
</dbReference>
<dbReference type="PANTHER" id="PTHR14742:SF0">
    <property type="entry name" value="RIBONUCLEASE P PROTEIN SUBUNIT P21"/>
    <property type="match status" value="1"/>
</dbReference>
<dbReference type="PANTHER" id="PTHR14742">
    <property type="entry name" value="RIBONUCLEASE P SUBUNIT P21"/>
    <property type="match status" value="1"/>
</dbReference>
<dbReference type="Pfam" id="PF04032">
    <property type="entry name" value="Rpr2"/>
    <property type="match status" value="1"/>
</dbReference>
<dbReference type="PIRSF" id="PIRSF004878">
    <property type="entry name" value="RNase_P_4"/>
    <property type="match status" value="1"/>
</dbReference>
<sequence length="107" mass="12995">MPRAARKQQKNLIQNIAVQRMWRLFERAKVELPENPERSRHYVQLIRNISMRNRISIPREIKSRICKHCYSFLTPGYNARYRLNEGFVVITCEHCGKEMRYPYKKLK</sequence>
<organism>
    <name type="scientific">Methanosarcina mazei (strain ATCC BAA-159 / DSM 3647 / Goe1 / Go1 / JCM 11833 / OCM 88)</name>
    <name type="common">Methanosarcina frisia</name>
    <dbReference type="NCBI Taxonomy" id="192952"/>
    <lineage>
        <taxon>Archaea</taxon>
        <taxon>Methanobacteriati</taxon>
        <taxon>Methanobacteriota</taxon>
        <taxon>Stenosarchaea group</taxon>
        <taxon>Methanomicrobia</taxon>
        <taxon>Methanosarcinales</taxon>
        <taxon>Methanosarcinaceae</taxon>
        <taxon>Methanosarcina</taxon>
    </lineage>
</organism>
<keyword id="KW-0963">Cytoplasm</keyword>
<keyword id="KW-0255">Endonuclease</keyword>
<keyword id="KW-0378">Hydrolase</keyword>
<keyword id="KW-0479">Metal-binding</keyword>
<keyword id="KW-0540">Nuclease</keyword>
<keyword id="KW-0819">tRNA processing</keyword>
<keyword id="KW-0862">Zinc</keyword>
<comment type="function">
    <text evidence="1">Part of ribonuclease P, a protein complex that generates mature tRNA molecules by cleaving their 5'-ends.</text>
</comment>
<comment type="catalytic activity">
    <reaction evidence="1">
        <text>Endonucleolytic cleavage of RNA, removing 5'-extranucleotides from tRNA precursor.</text>
        <dbReference type="EC" id="3.1.26.5"/>
    </reaction>
</comment>
<comment type="cofactor">
    <cofactor evidence="1">
        <name>Zn(2+)</name>
        <dbReference type="ChEBI" id="CHEBI:29105"/>
    </cofactor>
    <text evidence="1">Binds 1 zinc ion per subunit.</text>
</comment>
<comment type="subunit">
    <text evidence="1">Consists of a catalytic RNA component and at least 4-5 protein subunits.</text>
</comment>
<comment type="subcellular location">
    <subcellularLocation>
        <location evidence="1">Cytoplasm</location>
    </subcellularLocation>
</comment>
<comment type="similarity">
    <text evidence="1">Belongs to the eukaryotic/archaeal RNase P protein component 4 family.</text>
</comment>
<proteinExistence type="inferred from homology"/>
<evidence type="ECO:0000255" key="1">
    <source>
        <dbReference type="HAMAP-Rule" id="MF_00757"/>
    </source>
</evidence>
<gene>
    <name evidence="1" type="primary">rnp4</name>
    <name type="ordered locus">MM_1556</name>
</gene>
<accession>Q8PWM8</accession>
<feature type="chain" id="PRO_0000153854" description="Ribonuclease P protein component 4">
    <location>
        <begin position="1"/>
        <end position="107"/>
    </location>
</feature>
<feature type="binding site" evidence="1">
    <location>
        <position position="66"/>
    </location>
    <ligand>
        <name>Zn(2+)</name>
        <dbReference type="ChEBI" id="CHEBI:29105"/>
    </ligand>
</feature>
<feature type="binding site" evidence="1">
    <location>
        <position position="69"/>
    </location>
    <ligand>
        <name>Zn(2+)</name>
        <dbReference type="ChEBI" id="CHEBI:29105"/>
    </ligand>
</feature>
<feature type="binding site" evidence="1">
    <location>
        <position position="92"/>
    </location>
    <ligand>
        <name>Zn(2+)</name>
        <dbReference type="ChEBI" id="CHEBI:29105"/>
    </ligand>
</feature>
<feature type="binding site" evidence="1">
    <location>
        <position position="95"/>
    </location>
    <ligand>
        <name>Zn(2+)</name>
        <dbReference type="ChEBI" id="CHEBI:29105"/>
    </ligand>
</feature>
<reference key="1">
    <citation type="journal article" date="2002" name="J. Mol. Microbiol. Biotechnol.">
        <title>The genome of Methanosarcina mazei: evidence for lateral gene transfer between Bacteria and Archaea.</title>
        <authorList>
            <person name="Deppenmeier U."/>
            <person name="Johann A."/>
            <person name="Hartsch T."/>
            <person name="Merkl R."/>
            <person name="Schmitz R.A."/>
            <person name="Martinez-Arias R."/>
            <person name="Henne A."/>
            <person name="Wiezer A."/>
            <person name="Baeumer S."/>
            <person name="Jacobi C."/>
            <person name="Brueggemann H."/>
            <person name="Lienard T."/>
            <person name="Christmann A."/>
            <person name="Boemecke M."/>
            <person name="Steckel S."/>
            <person name="Bhattacharyya A."/>
            <person name="Lykidis A."/>
            <person name="Overbeek R."/>
            <person name="Klenk H.-P."/>
            <person name="Gunsalus R.P."/>
            <person name="Fritz H.-J."/>
            <person name="Gottschalk G."/>
        </authorList>
    </citation>
    <scope>NUCLEOTIDE SEQUENCE [LARGE SCALE GENOMIC DNA]</scope>
    <source>
        <strain>ATCC BAA-159 / DSM 3647 / Goe1 / Go1 / JCM 11833 / OCM 88</strain>
    </source>
</reference>